<protein>
    <recommendedName>
        <fullName evidence="1">Large ribosomal subunit protein bL27</fullName>
    </recommendedName>
    <alternativeName>
        <fullName evidence="3">50S ribosomal protein L27</fullName>
    </alternativeName>
    <alternativeName>
        <fullName>RRP-L27</fullName>
    </alternativeName>
</protein>
<organism>
    <name type="scientific">Rhodopseudomonas palustris (strain ATCC BAA-98 / CGA009)</name>
    <dbReference type="NCBI Taxonomy" id="258594"/>
    <lineage>
        <taxon>Bacteria</taxon>
        <taxon>Pseudomonadati</taxon>
        <taxon>Pseudomonadota</taxon>
        <taxon>Alphaproteobacteria</taxon>
        <taxon>Hyphomicrobiales</taxon>
        <taxon>Nitrobacteraceae</taxon>
        <taxon>Rhodopseudomonas</taxon>
    </lineage>
</organism>
<keyword id="KW-0687">Ribonucleoprotein</keyword>
<keyword id="KW-0689">Ribosomal protein</keyword>
<proteinExistence type="evidence at protein level"/>
<name>RL27_RHOPA</name>
<feature type="chain" id="PRO_0000181154" description="Large ribosomal subunit protein bL27">
    <location>
        <begin position="1"/>
        <end position="90"/>
    </location>
</feature>
<feature type="region of interest" description="Disordered" evidence="2">
    <location>
        <begin position="1"/>
        <end position="20"/>
    </location>
</feature>
<comment type="similarity">
    <text evidence="1">Belongs to the bacterial ribosomal protein bL27 family.</text>
</comment>
<gene>
    <name evidence="1" type="primary">rpmA</name>
    <name type="ordered locus">RPA0159</name>
</gene>
<reference key="1">
    <citation type="journal article" date="2004" name="Nat. Biotechnol.">
        <title>Complete genome sequence of the metabolically versatile photosynthetic bacterium Rhodopseudomonas palustris.</title>
        <authorList>
            <person name="Larimer F.W."/>
            <person name="Chain P."/>
            <person name="Hauser L."/>
            <person name="Lamerdin J.E."/>
            <person name="Malfatti S."/>
            <person name="Do L."/>
            <person name="Land M.L."/>
            <person name="Pelletier D.A."/>
            <person name="Beatty J.T."/>
            <person name="Lang A.S."/>
            <person name="Tabita F.R."/>
            <person name="Gibson J.L."/>
            <person name="Hanson T.E."/>
            <person name="Bobst C."/>
            <person name="Torres y Torres J.L."/>
            <person name="Peres C."/>
            <person name="Harrison F.H."/>
            <person name="Gibson J."/>
            <person name="Harwood C.S."/>
        </authorList>
    </citation>
    <scope>NUCLEOTIDE SEQUENCE [LARGE SCALE GENOMIC DNA]</scope>
    <source>
        <strain>ATCC BAA-98 / CGA009</strain>
    </source>
</reference>
<reference key="2">
    <citation type="journal article" date="2004" name="J. Proteome Res.">
        <title>Characterization of the 70S ribosome from Rhodopseudomonas palustris using an integrated 'top-down' and 'bottom-up' mass spectrometric approach.</title>
        <authorList>
            <person name="Strader M.B."/>
            <person name="VerBerkmoes N.C."/>
            <person name="Tabb D.L."/>
            <person name="Connelly H.M."/>
            <person name="Barton J.W."/>
            <person name="Bruce B.D."/>
            <person name="Pelletier D.A."/>
            <person name="Davison B.H."/>
            <person name="Hettich R.L."/>
            <person name="Larimer F.W."/>
            <person name="Hurst G.B."/>
        </authorList>
    </citation>
    <scope>IDENTIFICATION BY MASS SPECTROMETRY</scope>
    <source>
        <strain>ATCC BAA-98 / CGA009</strain>
    </source>
</reference>
<evidence type="ECO:0000255" key="1">
    <source>
        <dbReference type="HAMAP-Rule" id="MF_00539"/>
    </source>
</evidence>
<evidence type="ECO:0000256" key="2">
    <source>
        <dbReference type="SAM" id="MobiDB-lite"/>
    </source>
</evidence>
<evidence type="ECO:0000305" key="3"/>
<dbReference type="EMBL" id="BX572593">
    <property type="protein sequence ID" value="CAE25603.1"/>
    <property type="molecule type" value="Genomic_DNA"/>
</dbReference>
<dbReference type="RefSeq" id="WP_011155727.1">
    <property type="nucleotide sequence ID" value="NZ_CP116810.1"/>
</dbReference>
<dbReference type="SMR" id="Q6NDE9"/>
<dbReference type="IntAct" id="Q6NDE9">
    <property type="interactions" value="1"/>
</dbReference>
<dbReference type="STRING" id="258594.RPA0159"/>
<dbReference type="GeneID" id="66891162"/>
<dbReference type="eggNOG" id="COG0211">
    <property type="taxonomic scope" value="Bacteria"/>
</dbReference>
<dbReference type="HOGENOM" id="CLU_095424_4_1_5"/>
<dbReference type="PhylomeDB" id="Q6NDE9"/>
<dbReference type="GO" id="GO:0022625">
    <property type="term" value="C:cytosolic large ribosomal subunit"/>
    <property type="evidence" value="ECO:0007669"/>
    <property type="project" value="TreeGrafter"/>
</dbReference>
<dbReference type="GO" id="GO:0003735">
    <property type="term" value="F:structural constituent of ribosome"/>
    <property type="evidence" value="ECO:0007669"/>
    <property type="project" value="InterPro"/>
</dbReference>
<dbReference type="GO" id="GO:0006412">
    <property type="term" value="P:translation"/>
    <property type="evidence" value="ECO:0007669"/>
    <property type="project" value="UniProtKB-UniRule"/>
</dbReference>
<dbReference type="FunFam" id="2.40.50.100:FF:000020">
    <property type="entry name" value="50S ribosomal protein L27"/>
    <property type="match status" value="1"/>
</dbReference>
<dbReference type="Gene3D" id="2.40.50.100">
    <property type="match status" value="1"/>
</dbReference>
<dbReference type="HAMAP" id="MF_00539">
    <property type="entry name" value="Ribosomal_bL27"/>
    <property type="match status" value="1"/>
</dbReference>
<dbReference type="InterPro" id="IPR001684">
    <property type="entry name" value="Ribosomal_bL27"/>
</dbReference>
<dbReference type="InterPro" id="IPR018261">
    <property type="entry name" value="Ribosomal_bL27_CS"/>
</dbReference>
<dbReference type="NCBIfam" id="TIGR00062">
    <property type="entry name" value="L27"/>
    <property type="match status" value="1"/>
</dbReference>
<dbReference type="PANTHER" id="PTHR15893:SF0">
    <property type="entry name" value="LARGE RIBOSOMAL SUBUNIT PROTEIN BL27M"/>
    <property type="match status" value="1"/>
</dbReference>
<dbReference type="PANTHER" id="PTHR15893">
    <property type="entry name" value="RIBOSOMAL PROTEIN L27"/>
    <property type="match status" value="1"/>
</dbReference>
<dbReference type="Pfam" id="PF01016">
    <property type="entry name" value="Ribosomal_L27"/>
    <property type="match status" value="1"/>
</dbReference>
<dbReference type="PRINTS" id="PR00063">
    <property type="entry name" value="RIBOSOMALL27"/>
</dbReference>
<dbReference type="SUPFAM" id="SSF110324">
    <property type="entry name" value="Ribosomal L27 protein-like"/>
    <property type="match status" value="1"/>
</dbReference>
<dbReference type="PROSITE" id="PS00831">
    <property type="entry name" value="RIBOSOMAL_L27"/>
    <property type="match status" value="1"/>
</dbReference>
<sequence>MAHKKAGGSSRNGRDSAGKRLGVKAFGGEHVIPGNIIARQRGTQWHPGLNVGMGTDHTLFAKVEGRVEFRAKANGRTYVSVLPIAMQAAE</sequence>
<accession>Q6NDE9</accession>